<reference key="1">
    <citation type="journal article" date="2010" name="J. Bacteriol.">
        <title>Complete genome sequence of Beijerinckia indica subsp. indica.</title>
        <authorList>
            <person name="Tamas I."/>
            <person name="Dedysh S.N."/>
            <person name="Liesack W."/>
            <person name="Stott M.B."/>
            <person name="Alam M."/>
            <person name="Murrell J.C."/>
            <person name="Dunfield P.F."/>
        </authorList>
    </citation>
    <scope>NUCLEOTIDE SEQUENCE [LARGE SCALE GENOMIC DNA]</scope>
    <source>
        <strain>ATCC 9039 / DSM 1715 / NCIMB 8712</strain>
    </source>
</reference>
<sequence length="103" mass="11071">MFAVIKTGGKQYSVAADDIITVMTLQGEPGDAVTFDSVLMLAGEGEPKIGAPFIAGATVSGEIVEQTRGPKVISFKKRRRQNSKRKRGHRQDLTLVKITGINA</sequence>
<name>RL21_BEII9</name>
<accession>B2IE47</accession>
<protein>
    <recommendedName>
        <fullName evidence="1">Large ribosomal subunit protein bL21</fullName>
    </recommendedName>
    <alternativeName>
        <fullName evidence="2">50S ribosomal protein L21</fullName>
    </alternativeName>
</protein>
<proteinExistence type="inferred from homology"/>
<comment type="function">
    <text evidence="1">This protein binds to 23S rRNA in the presence of protein L20.</text>
</comment>
<comment type="subunit">
    <text evidence="1">Part of the 50S ribosomal subunit. Contacts protein L20.</text>
</comment>
<comment type="similarity">
    <text evidence="1">Belongs to the bacterial ribosomal protein bL21 family.</text>
</comment>
<gene>
    <name evidence="1" type="primary">rplU</name>
    <name type="ordered locus">Bind_0418</name>
</gene>
<organism>
    <name type="scientific">Beijerinckia indica subsp. indica (strain ATCC 9039 / DSM 1715 / NCIMB 8712)</name>
    <dbReference type="NCBI Taxonomy" id="395963"/>
    <lineage>
        <taxon>Bacteria</taxon>
        <taxon>Pseudomonadati</taxon>
        <taxon>Pseudomonadota</taxon>
        <taxon>Alphaproteobacteria</taxon>
        <taxon>Hyphomicrobiales</taxon>
        <taxon>Beijerinckiaceae</taxon>
        <taxon>Beijerinckia</taxon>
    </lineage>
</organism>
<feature type="chain" id="PRO_1000143758" description="Large ribosomal subunit protein bL21">
    <location>
        <begin position="1"/>
        <end position="103"/>
    </location>
</feature>
<evidence type="ECO:0000255" key="1">
    <source>
        <dbReference type="HAMAP-Rule" id="MF_01363"/>
    </source>
</evidence>
<evidence type="ECO:0000305" key="2"/>
<dbReference type="EMBL" id="CP001016">
    <property type="protein sequence ID" value="ACB94071.1"/>
    <property type="molecule type" value="Genomic_DNA"/>
</dbReference>
<dbReference type="RefSeq" id="WP_012383429.1">
    <property type="nucleotide sequence ID" value="NC_010581.1"/>
</dbReference>
<dbReference type="SMR" id="B2IE47"/>
<dbReference type="STRING" id="395963.Bind_0418"/>
<dbReference type="KEGG" id="bid:Bind_0418"/>
<dbReference type="eggNOG" id="COG0261">
    <property type="taxonomic scope" value="Bacteria"/>
</dbReference>
<dbReference type="HOGENOM" id="CLU_061463_3_2_5"/>
<dbReference type="OrthoDB" id="9813334at2"/>
<dbReference type="Proteomes" id="UP000001695">
    <property type="component" value="Chromosome"/>
</dbReference>
<dbReference type="GO" id="GO:0005737">
    <property type="term" value="C:cytoplasm"/>
    <property type="evidence" value="ECO:0007669"/>
    <property type="project" value="UniProtKB-ARBA"/>
</dbReference>
<dbReference type="GO" id="GO:1990904">
    <property type="term" value="C:ribonucleoprotein complex"/>
    <property type="evidence" value="ECO:0007669"/>
    <property type="project" value="UniProtKB-KW"/>
</dbReference>
<dbReference type="GO" id="GO:0005840">
    <property type="term" value="C:ribosome"/>
    <property type="evidence" value="ECO:0007669"/>
    <property type="project" value="UniProtKB-KW"/>
</dbReference>
<dbReference type="GO" id="GO:0019843">
    <property type="term" value="F:rRNA binding"/>
    <property type="evidence" value="ECO:0007669"/>
    <property type="project" value="UniProtKB-UniRule"/>
</dbReference>
<dbReference type="GO" id="GO:0003735">
    <property type="term" value="F:structural constituent of ribosome"/>
    <property type="evidence" value="ECO:0007669"/>
    <property type="project" value="InterPro"/>
</dbReference>
<dbReference type="GO" id="GO:0006412">
    <property type="term" value="P:translation"/>
    <property type="evidence" value="ECO:0007669"/>
    <property type="project" value="UniProtKB-UniRule"/>
</dbReference>
<dbReference type="HAMAP" id="MF_01363">
    <property type="entry name" value="Ribosomal_bL21"/>
    <property type="match status" value="1"/>
</dbReference>
<dbReference type="InterPro" id="IPR028909">
    <property type="entry name" value="bL21-like"/>
</dbReference>
<dbReference type="InterPro" id="IPR036164">
    <property type="entry name" value="bL21-like_sf"/>
</dbReference>
<dbReference type="InterPro" id="IPR001787">
    <property type="entry name" value="Ribosomal_bL21"/>
</dbReference>
<dbReference type="NCBIfam" id="TIGR00061">
    <property type="entry name" value="L21"/>
    <property type="match status" value="1"/>
</dbReference>
<dbReference type="PANTHER" id="PTHR21349">
    <property type="entry name" value="50S RIBOSOMAL PROTEIN L21"/>
    <property type="match status" value="1"/>
</dbReference>
<dbReference type="PANTHER" id="PTHR21349:SF0">
    <property type="entry name" value="LARGE RIBOSOMAL SUBUNIT PROTEIN BL21M"/>
    <property type="match status" value="1"/>
</dbReference>
<dbReference type="Pfam" id="PF00829">
    <property type="entry name" value="Ribosomal_L21p"/>
    <property type="match status" value="1"/>
</dbReference>
<dbReference type="SUPFAM" id="SSF141091">
    <property type="entry name" value="L21p-like"/>
    <property type="match status" value="1"/>
</dbReference>
<keyword id="KW-1185">Reference proteome</keyword>
<keyword id="KW-0687">Ribonucleoprotein</keyword>
<keyword id="KW-0689">Ribosomal protein</keyword>
<keyword id="KW-0694">RNA-binding</keyword>
<keyword id="KW-0699">rRNA-binding</keyword>